<feature type="chain" id="PRO_0000227201" description="Anthranilate phosphoribosyltransferase">
    <location>
        <begin position="1"/>
        <end position="331"/>
    </location>
</feature>
<feature type="binding site" evidence="1">
    <location>
        <position position="78"/>
    </location>
    <ligand>
        <name>5-phospho-alpha-D-ribose 1-diphosphate</name>
        <dbReference type="ChEBI" id="CHEBI:58017"/>
    </ligand>
</feature>
<feature type="binding site" evidence="1">
    <location>
        <position position="78"/>
    </location>
    <ligand>
        <name>anthranilate</name>
        <dbReference type="ChEBI" id="CHEBI:16567"/>
        <label>1</label>
    </ligand>
</feature>
<feature type="binding site" evidence="1">
    <location>
        <begin position="81"/>
        <end position="82"/>
    </location>
    <ligand>
        <name>5-phospho-alpha-D-ribose 1-diphosphate</name>
        <dbReference type="ChEBI" id="CHEBI:58017"/>
    </ligand>
</feature>
<feature type="binding site" evidence="1">
    <location>
        <position position="86"/>
    </location>
    <ligand>
        <name>5-phospho-alpha-D-ribose 1-diphosphate</name>
        <dbReference type="ChEBI" id="CHEBI:58017"/>
    </ligand>
</feature>
<feature type="binding site" evidence="1">
    <location>
        <begin position="88"/>
        <end position="91"/>
    </location>
    <ligand>
        <name>5-phospho-alpha-D-ribose 1-diphosphate</name>
        <dbReference type="ChEBI" id="CHEBI:58017"/>
    </ligand>
</feature>
<feature type="binding site" evidence="1">
    <location>
        <position position="90"/>
    </location>
    <ligand>
        <name>Mg(2+)</name>
        <dbReference type="ChEBI" id="CHEBI:18420"/>
        <label>1</label>
    </ligand>
</feature>
<feature type="binding site" evidence="1">
    <location>
        <begin position="106"/>
        <end position="114"/>
    </location>
    <ligand>
        <name>5-phospho-alpha-D-ribose 1-diphosphate</name>
        <dbReference type="ChEBI" id="CHEBI:58017"/>
    </ligand>
</feature>
<feature type="binding site" evidence="1">
    <location>
        <position position="109"/>
    </location>
    <ligand>
        <name>anthranilate</name>
        <dbReference type="ChEBI" id="CHEBI:16567"/>
        <label>1</label>
    </ligand>
</feature>
<feature type="binding site" evidence="1">
    <location>
        <position position="118"/>
    </location>
    <ligand>
        <name>5-phospho-alpha-D-ribose 1-diphosphate</name>
        <dbReference type="ChEBI" id="CHEBI:58017"/>
    </ligand>
</feature>
<feature type="binding site" evidence="1">
    <location>
        <position position="164"/>
    </location>
    <ligand>
        <name>anthranilate</name>
        <dbReference type="ChEBI" id="CHEBI:16567"/>
        <label>2</label>
    </ligand>
</feature>
<feature type="binding site" evidence="1">
    <location>
        <position position="222"/>
    </location>
    <ligand>
        <name>Mg(2+)</name>
        <dbReference type="ChEBI" id="CHEBI:18420"/>
        <label>2</label>
    </ligand>
</feature>
<feature type="binding site" evidence="1">
    <location>
        <position position="223"/>
    </location>
    <ligand>
        <name>Mg(2+)</name>
        <dbReference type="ChEBI" id="CHEBI:18420"/>
        <label>1</label>
    </ligand>
</feature>
<feature type="binding site" evidence="1">
    <location>
        <position position="223"/>
    </location>
    <ligand>
        <name>Mg(2+)</name>
        <dbReference type="ChEBI" id="CHEBI:18420"/>
        <label>2</label>
    </ligand>
</feature>
<dbReference type="EC" id="2.4.2.18" evidence="1"/>
<dbReference type="EMBL" id="AY596297">
    <property type="protein sequence ID" value="AAV46441.1"/>
    <property type="molecule type" value="Genomic_DNA"/>
</dbReference>
<dbReference type="RefSeq" id="WP_004957230.1">
    <property type="nucleotide sequence ID" value="NZ_CP039138.1"/>
</dbReference>
<dbReference type="SMR" id="Q5V211"/>
<dbReference type="STRING" id="272569.rrnAC1520"/>
<dbReference type="PaxDb" id="272569-rrnAC1520"/>
<dbReference type="EnsemblBacteria" id="AAV46441">
    <property type="protein sequence ID" value="AAV46441"/>
    <property type="gene ID" value="rrnAC1520"/>
</dbReference>
<dbReference type="GeneID" id="64821887"/>
<dbReference type="KEGG" id="hma:rrnAC1520"/>
<dbReference type="PATRIC" id="fig|272569.17.peg.2209"/>
<dbReference type="eggNOG" id="arCOG02012">
    <property type="taxonomic scope" value="Archaea"/>
</dbReference>
<dbReference type="HOGENOM" id="CLU_034315_2_1_2"/>
<dbReference type="UniPathway" id="UPA00035">
    <property type="reaction ID" value="UER00041"/>
</dbReference>
<dbReference type="Proteomes" id="UP000001169">
    <property type="component" value="Chromosome I"/>
</dbReference>
<dbReference type="GO" id="GO:0005829">
    <property type="term" value="C:cytosol"/>
    <property type="evidence" value="ECO:0007669"/>
    <property type="project" value="TreeGrafter"/>
</dbReference>
<dbReference type="GO" id="GO:0004048">
    <property type="term" value="F:anthranilate phosphoribosyltransferase activity"/>
    <property type="evidence" value="ECO:0007669"/>
    <property type="project" value="UniProtKB-UniRule"/>
</dbReference>
<dbReference type="GO" id="GO:0000287">
    <property type="term" value="F:magnesium ion binding"/>
    <property type="evidence" value="ECO:0007669"/>
    <property type="project" value="UniProtKB-UniRule"/>
</dbReference>
<dbReference type="GO" id="GO:0000162">
    <property type="term" value="P:L-tryptophan biosynthetic process"/>
    <property type="evidence" value="ECO:0007669"/>
    <property type="project" value="UniProtKB-UniRule"/>
</dbReference>
<dbReference type="FunFam" id="3.40.1030.10:FF:000002">
    <property type="entry name" value="Anthranilate phosphoribosyltransferase"/>
    <property type="match status" value="1"/>
</dbReference>
<dbReference type="Gene3D" id="3.40.1030.10">
    <property type="entry name" value="Nucleoside phosphorylase/phosphoribosyltransferase catalytic domain"/>
    <property type="match status" value="1"/>
</dbReference>
<dbReference type="Gene3D" id="1.20.970.10">
    <property type="entry name" value="Transferase, Pyrimidine Nucleoside Phosphorylase, Chain C"/>
    <property type="match status" value="1"/>
</dbReference>
<dbReference type="HAMAP" id="MF_00211">
    <property type="entry name" value="TrpD"/>
    <property type="match status" value="1"/>
</dbReference>
<dbReference type="InterPro" id="IPR005940">
    <property type="entry name" value="Anthranilate_Pribosyl_Tfrase"/>
</dbReference>
<dbReference type="InterPro" id="IPR000312">
    <property type="entry name" value="Glycosyl_Trfase_fam3"/>
</dbReference>
<dbReference type="InterPro" id="IPR017459">
    <property type="entry name" value="Glycosyl_Trfase_fam3_N_dom"/>
</dbReference>
<dbReference type="InterPro" id="IPR036320">
    <property type="entry name" value="Glycosyl_Trfase_fam3_N_dom_sf"/>
</dbReference>
<dbReference type="InterPro" id="IPR035902">
    <property type="entry name" value="Nuc_phospho_transferase"/>
</dbReference>
<dbReference type="NCBIfam" id="TIGR01245">
    <property type="entry name" value="trpD"/>
    <property type="match status" value="1"/>
</dbReference>
<dbReference type="PANTHER" id="PTHR43285">
    <property type="entry name" value="ANTHRANILATE PHOSPHORIBOSYLTRANSFERASE"/>
    <property type="match status" value="1"/>
</dbReference>
<dbReference type="PANTHER" id="PTHR43285:SF2">
    <property type="entry name" value="ANTHRANILATE PHOSPHORIBOSYLTRANSFERASE"/>
    <property type="match status" value="1"/>
</dbReference>
<dbReference type="Pfam" id="PF02885">
    <property type="entry name" value="Glycos_trans_3N"/>
    <property type="match status" value="1"/>
</dbReference>
<dbReference type="Pfam" id="PF00591">
    <property type="entry name" value="Glycos_transf_3"/>
    <property type="match status" value="1"/>
</dbReference>
<dbReference type="SUPFAM" id="SSF52418">
    <property type="entry name" value="Nucleoside phosphorylase/phosphoribosyltransferase catalytic domain"/>
    <property type="match status" value="1"/>
</dbReference>
<dbReference type="SUPFAM" id="SSF47648">
    <property type="entry name" value="Nucleoside phosphorylase/phosphoribosyltransferase N-terminal domain"/>
    <property type="match status" value="1"/>
</dbReference>
<reference key="1">
    <citation type="journal article" date="2004" name="Genome Res.">
        <title>Genome sequence of Haloarcula marismortui: a halophilic archaeon from the Dead Sea.</title>
        <authorList>
            <person name="Baliga N.S."/>
            <person name="Bonneau R."/>
            <person name="Facciotti M.T."/>
            <person name="Pan M."/>
            <person name="Glusman G."/>
            <person name="Deutsch E.W."/>
            <person name="Shannon P."/>
            <person name="Chiu Y."/>
            <person name="Weng R.S."/>
            <person name="Gan R.R."/>
            <person name="Hung P."/>
            <person name="Date S.V."/>
            <person name="Marcotte E."/>
            <person name="Hood L."/>
            <person name="Ng W.V."/>
        </authorList>
    </citation>
    <scope>NUCLEOTIDE SEQUENCE [LARGE SCALE GENOMIC DNA]</scope>
    <source>
        <strain>ATCC 43049 / DSM 3752 / JCM 8966 / VKM B-1809</strain>
    </source>
</reference>
<evidence type="ECO:0000255" key="1">
    <source>
        <dbReference type="HAMAP-Rule" id="MF_00211"/>
    </source>
</evidence>
<gene>
    <name evidence="1" type="primary">trpD</name>
    <name type="ordered locus">rrnAC1520</name>
</gene>
<keyword id="KW-0028">Amino-acid biosynthesis</keyword>
<keyword id="KW-0057">Aromatic amino acid biosynthesis</keyword>
<keyword id="KW-0328">Glycosyltransferase</keyword>
<keyword id="KW-0460">Magnesium</keyword>
<keyword id="KW-0479">Metal-binding</keyword>
<keyword id="KW-1185">Reference proteome</keyword>
<keyword id="KW-0808">Transferase</keyword>
<keyword id="KW-0822">Tryptophan biosynthesis</keyword>
<sequence length="331" mass="34409">MKEYIERVTDGDDLTQAEARAVATTVFEDATEAQIGALLTALRAKGETEAEIAGFAEGMRDAARTIRPDREGLVDTCGTGGDDYNTINVSTTSAIVAAGAGVPIAKHGNYSVSSSSGSADVLEEVGVDIEAEPPDVEETIERDGIGFMLAPVFHPAMKAVIGPRQELGMRTVFNILGPLTNPADADAQVLGVYDPDLVPVMAEALARLDVERALVVHGDGLDEIAIHGETVVAEVTDDRIAEYTITPEDMGLETRDIEAISGGSPEENAADLRGIVTGDVTGAKRDIILANAGAAIYVAGVADTHEAGVEQARQAIESGAAADKLDDLIGA</sequence>
<name>TRPD_HALMA</name>
<proteinExistence type="inferred from homology"/>
<protein>
    <recommendedName>
        <fullName evidence="1">Anthranilate phosphoribosyltransferase</fullName>
        <ecNumber evidence="1">2.4.2.18</ecNumber>
    </recommendedName>
</protein>
<comment type="function">
    <text evidence="1">Catalyzes the transfer of the phosphoribosyl group of 5-phosphorylribose-1-pyrophosphate (PRPP) to anthranilate to yield N-(5'-phosphoribosyl)-anthranilate (PRA).</text>
</comment>
<comment type="catalytic activity">
    <reaction evidence="1">
        <text>N-(5-phospho-beta-D-ribosyl)anthranilate + diphosphate = 5-phospho-alpha-D-ribose 1-diphosphate + anthranilate</text>
        <dbReference type="Rhea" id="RHEA:11768"/>
        <dbReference type="ChEBI" id="CHEBI:16567"/>
        <dbReference type="ChEBI" id="CHEBI:18277"/>
        <dbReference type="ChEBI" id="CHEBI:33019"/>
        <dbReference type="ChEBI" id="CHEBI:58017"/>
        <dbReference type="EC" id="2.4.2.18"/>
    </reaction>
</comment>
<comment type="cofactor">
    <cofactor evidence="1">
        <name>Mg(2+)</name>
        <dbReference type="ChEBI" id="CHEBI:18420"/>
    </cofactor>
    <text evidence="1">Binds 2 magnesium ions per monomer.</text>
</comment>
<comment type="pathway">
    <text evidence="1">Amino-acid biosynthesis; L-tryptophan biosynthesis; L-tryptophan from chorismate: step 2/5.</text>
</comment>
<comment type="subunit">
    <text evidence="1">Homodimer.</text>
</comment>
<comment type="similarity">
    <text evidence="1">Belongs to the anthranilate phosphoribosyltransferase family.</text>
</comment>
<organism>
    <name type="scientific">Haloarcula marismortui (strain ATCC 43049 / DSM 3752 / JCM 8966 / VKM B-1809)</name>
    <name type="common">Halobacterium marismortui</name>
    <dbReference type="NCBI Taxonomy" id="272569"/>
    <lineage>
        <taxon>Archaea</taxon>
        <taxon>Methanobacteriati</taxon>
        <taxon>Methanobacteriota</taxon>
        <taxon>Stenosarchaea group</taxon>
        <taxon>Halobacteria</taxon>
        <taxon>Halobacteriales</taxon>
        <taxon>Haloarculaceae</taxon>
        <taxon>Haloarcula</taxon>
    </lineage>
</organism>
<accession>Q5V211</accession>